<dbReference type="EC" id="3.1.1.96" evidence="1"/>
<dbReference type="EMBL" id="CP000749">
    <property type="protein sequence ID" value="ABR69673.1"/>
    <property type="molecule type" value="Genomic_DNA"/>
</dbReference>
<dbReference type="SMR" id="A6VT94"/>
<dbReference type="STRING" id="400668.Mmwyl1_0739"/>
<dbReference type="KEGG" id="mmw:Mmwyl1_0739"/>
<dbReference type="eggNOG" id="COG1490">
    <property type="taxonomic scope" value="Bacteria"/>
</dbReference>
<dbReference type="HOGENOM" id="CLU_076901_1_0_6"/>
<dbReference type="OrthoDB" id="9801395at2"/>
<dbReference type="GO" id="GO:0005737">
    <property type="term" value="C:cytoplasm"/>
    <property type="evidence" value="ECO:0007669"/>
    <property type="project" value="UniProtKB-SubCell"/>
</dbReference>
<dbReference type="GO" id="GO:0051500">
    <property type="term" value="F:D-tyrosyl-tRNA(Tyr) deacylase activity"/>
    <property type="evidence" value="ECO:0007669"/>
    <property type="project" value="TreeGrafter"/>
</dbReference>
<dbReference type="GO" id="GO:0106026">
    <property type="term" value="F:Gly-tRNA(Ala) deacylase activity"/>
    <property type="evidence" value="ECO:0007669"/>
    <property type="project" value="UniProtKB-UniRule"/>
</dbReference>
<dbReference type="GO" id="GO:0043908">
    <property type="term" value="F:Ser(Gly)-tRNA(Ala) hydrolase activity"/>
    <property type="evidence" value="ECO:0007669"/>
    <property type="project" value="UniProtKB-UniRule"/>
</dbReference>
<dbReference type="GO" id="GO:0000049">
    <property type="term" value="F:tRNA binding"/>
    <property type="evidence" value="ECO:0007669"/>
    <property type="project" value="UniProtKB-UniRule"/>
</dbReference>
<dbReference type="GO" id="GO:0019478">
    <property type="term" value="P:D-amino acid catabolic process"/>
    <property type="evidence" value="ECO:0007669"/>
    <property type="project" value="UniProtKB-UniRule"/>
</dbReference>
<dbReference type="CDD" id="cd00563">
    <property type="entry name" value="Dtyr_deacylase"/>
    <property type="match status" value="1"/>
</dbReference>
<dbReference type="FunFam" id="3.50.80.10:FF:000001">
    <property type="entry name" value="D-aminoacyl-tRNA deacylase"/>
    <property type="match status" value="1"/>
</dbReference>
<dbReference type="Gene3D" id="3.50.80.10">
    <property type="entry name" value="D-tyrosyl-tRNA(Tyr) deacylase"/>
    <property type="match status" value="1"/>
</dbReference>
<dbReference type="HAMAP" id="MF_00518">
    <property type="entry name" value="Deacylase_Dtd"/>
    <property type="match status" value="1"/>
</dbReference>
<dbReference type="InterPro" id="IPR003732">
    <property type="entry name" value="Daa-tRNA_deacyls_DTD"/>
</dbReference>
<dbReference type="InterPro" id="IPR023509">
    <property type="entry name" value="DTD-like_sf"/>
</dbReference>
<dbReference type="NCBIfam" id="TIGR00256">
    <property type="entry name" value="D-aminoacyl-tRNA deacylase"/>
    <property type="match status" value="1"/>
</dbReference>
<dbReference type="PANTHER" id="PTHR10472:SF5">
    <property type="entry name" value="D-AMINOACYL-TRNA DEACYLASE 1"/>
    <property type="match status" value="1"/>
</dbReference>
<dbReference type="PANTHER" id="PTHR10472">
    <property type="entry name" value="D-TYROSYL-TRNA TYR DEACYLASE"/>
    <property type="match status" value="1"/>
</dbReference>
<dbReference type="Pfam" id="PF02580">
    <property type="entry name" value="Tyr_Deacylase"/>
    <property type="match status" value="1"/>
</dbReference>
<dbReference type="SUPFAM" id="SSF69500">
    <property type="entry name" value="DTD-like"/>
    <property type="match status" value="1"/>
</dbReference>
<proteinExistence type="inferred from homology"/>
<name>DTD_MARMS</name>
<organism>
    <name type="scientific">Marinomonas sp. (strain MWYL1)</name>
    <dbReference type="NCBI Taxonomy" id="400668"/>
    <lineage>
        <taxon>Bacteria</taxon>
        <taxon>Pseudomonadati</taxon>
        <taxon>Pseudomonadota</taxon>
        <taxon>Gammaproteobacteria</taxon>
        <taxon>Oceanospirillales</taxon>
        <taxon>Oceanospirillaceae</taxon>
        <taxon>Marinomonas</taxon>
    </lineage>
</organism>
<evidence type="ECO:0000255" key="1">
    <source>
        <dbReference type="HAMAP-Rule" id="MF_00518"/>
    </source>
</evidence>
<reference key="1">
    <citation type="submission" date="2007-06" db="EMBL/GenBank/DDBJ databases">
        <title>Complete sequence of Marinomonas sp. MWYL1.</title>
        <authorList>
            <consortium name="US DOE Joint Genome Institute"/>
            <person name="Copeland A."/>
            <person name="Lucas S."/>
            <person name="Lapidus A."/>
            <person name="Barry K."/>
            <person name="Glavina del Rio T."/>
            <person name="Dalin E."/>
            <person name="Tice H."/>
            <person name="Pitluck S."/>
            <person name="Kiss H."/>
            <person name="Brettin T."/>
            <person name="Bruce D."/>
            <person name="Detter J.C."/>
            <person name="Han C."/>
            <person name="Schmutz J."/>
            <person name="Larimer F."/>
            <person name="Land M."/>
            <person name="Hauser L."/>
            <person name="Kyrpides N."/>
            <person name="Kim E."/>
            <person name="Johnston A.W.B."/>
            <person name="Todd J.D."/>
            <person name="Rogers R."/>
            <person name="Wexler M."/>
            <person name="Bond P.L."/>
            <person name="Li Y."/>
            <person name="Richardson P."/>
        </authorList>
    </citation>
    <scope>NUCLEOTIDE SEQUENCE [LARGE SCALE GENOMIC DNA]</scope>
    <source>
        <strain>MWYL1</strain>
    </source>
</reference>
<feature type="chain" id="PRO_1000081657" description="D-aminoacyl-tRNA deacylase">
    <location>
        <begin position="1"/>
        <end position="144"/>
    </location>
</feature>
<feature type="short sequence motif" description="Gly-cisPro motif, important for rejection of L-amino acids" evidence="1">
    <location>
        <begin position="137"/>
        <end position="138"/>
    </location>
</feature>
<gene>
    <name evidence="1" type="primary">dtd</name>
    <name type="ordered locus">Mmwyl1_0739</name>
</gene>
<sequence length="144" mass="15740">MKVLIQRALNACVVVDGETIGAIDHGQLVLVGIEKGDTEVDTQRLADKLLKYRMFGDEDGKMNLNVQQVAGGILLVSQFTLAAETKKGLRPGFSTAAIPEEGERLFNDFVNKVRAQYSKVETGRFGADMKVSFTNDGPVTFMLD</sequence>
<keyword id="KW-0963">Cytoplasm</keyword>
<keyword id="KW-0378">Hydrolase</keyword>
<keyword id="KW-0694">RNA-binding</keyword>
<keyword id="KW-0820">tRNA-binding</keyword>
<accession>A6VT94</accession>
<comment type="function">
    <text evidence="1">An aminoacyl-tRNA editing enzyme that deacylates mischarged D-aminoacyl-tRNAs. Also deacylates mischarged glycyl-tRNA(Ala), protecting cells against glycine mischarging by AlaRS. Acts via tRNA-based rather than protein-based catalysis; rejects L-amino acids rather than detecting D-amino acids in the active site. By recycling D-aminoacyl-tRNA to D-amino acids and free tRNA molecules, this enzyme counteracts the toxicity associated with the formation of D-aminoacyl-tRNA entities in vivo and helps enforce protein L-homochirality.</text>
</comment>
<comment type="catalytic activity">
    <reaction evidence="1">
        <text>glycyl-tRNA(Ala) + H2O = tRNA(Ala) + glycine + H(+)</text>
        <dbReference type="Rhea" id="RHEA:53744"/>
        <dbReference type="Rhea" id="RHEA-COMP:9657"/>
        <dbReference type="Rhea" id="RHEA-COMP:13640"/>
        <dbReference type="ChEBI" id="CHEBI:15377"/>
        <dbReference type="ChEBI" id="CHEBI:15378"/>
        <dbReference type="ChEBI" id="CHEBI:57305"/>
        <dbReference type="ChEBI" id="CHEBI:78442"/>
        <dbReference type="ChEBI" id="CHEBI:78522"/>
        <dbReference type="EC" id="3.1.1.96"/>
    </reaction>
</comment>
<comment type="catalytic activity">
    <reaction evidence="1">
        <text>a D-aminoacyl-tRNA + H2O = a tRNA + a D-alpha-amino acid + H(+)</text>
        <dbReference type="Rhea" id="RHEA:13953"/>
        <dbReference type="Rhea" id="RHEA-COMP:10123"/>
        <dbReference type="Rhea" id="RHEA-COMP:10124"/>
        <dbReference type="ChEBI" id="CHEBI:15377"/>
        <dbReference type="ChEBI" id="CHEBI:15378"/>
        <dbReference type="ChEBI" id="CHEBI:59871"/>
        <dbReference type="ChEBI" id="CHEBI:78442"/>
        <dbReference type="ChEBI" id="CHEBI:79333"/>
        <dbReference type="EC" id="3.1.1.96"/>
    </reaction>
</comment>
<comment type="subunit">
    <text evidence="1">Homodimer.</text>
</comment>
<comment type="subcellular location">
    <subcellularLocation>
        <location evidence="1">Cytoplasm</location>
    </subcellularLocation>
</comment>
<comment type="domain">
    <text evidence="1">A Gly-cisPro motif from one monomer fits into the active site of the other monomer to allow specific chiral rejection of L-amino acids.</text>
</comment>
<comment type="similarity">
    <text evidence="1">Belongs to the DTD family.</text>
</comment>
<protein>
    <recommendedName>
        <fullName evidence="1">D-aminoacyl-tRNA deacylase</fullName>
        <shortName evidence="1">DTD</shortName>
        <ecNumber evidence="1">3.1.1.96</ecNumber>
    </recommendedName>
    <alternativeName>
        <fullName evidence="1">Gly-tRNA(Ala) deacylase</fullName>
    </alternativeName>
</protein>